<gene>
    <name evidence="10" type="primary">fmqC</name>
    <name evidence="8" type="synonym">NRPS11</name>
    <name evidence="9" type="synonym">pesL</name>
    <name type="ORF">AFUA_6G12050</name>
</gene>
<organism>
    <name type="scientific">Aspergillus fumigatus (strain ATCC MYA-4609 / CBS 101355 / FGSC A1100 / Af293)</name>
    <name type="common">Neosartorya fumigata</name>
    <dbReference type="NCBI Taxonomy" id="330879"/>
    <lineage>
        <taxon>Eukaryota</taxon>
        <taxon>Fungi</taxon>
        <taxon>Dikarya</taxon>
        <taxon>Ascomycota</taxon>
        <taxon>Pezizomycotina</taxon>
        <taxon>Eurotiomycetes</taxon>
        <taxon>Eurotiomycetidae</taxon>
        <taxon>Eurotiales</taxon>
        <taxon>Aspergillaceae</taxon>
        <taxon>Aspergillus</taxon>
        <taxon>Aspergillus subgen. Fumigati</taxon>
    </lineage>
</organism>
<feature type="chain" id="PRO_0000416552" description="Nonribosomal peptide synthetase fmqC">
    <location>
        <begin position="1"/>
        <end position="1160"/>
    </location>
</feature>
<feature type="domain" description="Carrier" evidence="1 2 12 13">
    <location>
        <begin position="642"/>
        <end position="719"/>
    </location>
</feature>
<feature type="region of interest" description="Adenylation" evidence="1 12 13">
    <location>
        <begin position="132"/>
        <end position="520"/>
    </location>
</feature>
<feature type="region of interest" description="Condensation" evidence="1 12 13">
    <location>
        <begin position="749"/>
        <end position="1025"/>
    </location>
</feature>
<feature type="modified residue" description="O-(pantetheine 4'-phosphoryl)serine" evidence="2">
    <location>
        <position position="679"/>
    </location>
</feature>
<accession>Q4WLW8</accession>
<evidence type="ECO:0000255" key="1"/>
<evidence type="ECO:0000255" key="2">
    <source>
        <dbReference type="PROSITE-ProRule" id="PRU00258"/>
    </source>
</evidence>
<evidence type="ECO:0000269" key="3">
    <source>
    </source>
</evidence>
<evidence type="ECO:0000269" key="4">
    <source>
    </source>
</evidence>
<evidence type="ECO:0000269" key="5">
    <source>
    </source>
</evidence>
<evidence type="ECO:0000269" key="6">
    <source>
    </source>
</evidence>
<evidence type="ECO:0000269" key="7">
    <source>
    </source>
</evidence>
<evidence type="ECO:0000303" key="8">
    <source>
    </source>
</evidence>
<evidence type="ECO:0000303" key="9">
    <source>
    </source>
</evidence>
<evidence type="ECO:0000303" key="10">
    <source>
    </source>
</evidence>
<evidence type="ECO:0000305" key="11"/>
<evidence type="ECO:0000305" key="12">
    <source>
    </source>
</evidence>
<evidence type="ECO:0000305" key="13">
    <source>
    </source>
</evidence>
<reference key="1">
    <citation type="journal article" date="2005" name="Nature">
        <title>Genomic sequence of the pathogenic and allergenic filamentous fungus Aspergillus fumigatus.</title>
        <authorList>
            <person name="Nierman W.C."/>
            <person name="Pain A."/>
            <person name="Anderson M.J."/>
            <person name="Wortman J.R."/>
            <person name="Kim H.S."/>
            <person name="Arroyo J."/>
            <person name="Berriman M."/>
            <person name="Abe K."/>
            <person name="Archer D.B."/>
            <person name="Bermejo C."/>
            <person name="Bennett J.W."/>
            <person name="Bowyer P."/>
            <person name="Chen D."/>
            <person name="Collins M."/>
            <person name="Coulsen R."/>
            <person name="Davies R."/>
            <person name="Dyer P.S."/>
            <person name="Farman M.L."/>
            <person name="Fedorova N."/>
            <person name="Fedorova N.D."/>
            <person name="Feldblyum T.V."/>
            <person name="Fischer R."/>
            <person name="Fosker N."/>
            <person name="Fraser A."/>
            <person name="Garcia J.L."/>
            <person name="Garcia M.J."/>
            <person name="Goble A."/>
            <person name="Goldman G.H."/>
            <person name="Gomi K."/>
            <person name="Griffith-Jones S."/>
            <person name="Gwilliam R."/>
            <person name="Haas B.J."/>
            <person name="Haas H."/>
            <person name="Harris D.E."/>
            <person name="Horiuchi H."/>
            <person name="Huang J."/>
            <person name="Humphray S."/>
            <person name="Jimenez J."/>
            <person name="Keller N."/>
            <person name="Khouri H."/>
            <person name="Kitamoto K."/>
            <person name="Kobayashi T."/>
            <person name="Konzack S."/>
            <person name="Kulkarni R."/>
            <person name="Kumagai T."/>
            <person name="Lafton A."/>
            <person name="Latge J.-P."/>
            <person name="Li W."/>
            <person name="Lord A."/>
            <person name="Lu C."/>
            <person name="Majoros W.H."/>
            <person name="May G.S."/>
            <person name="Miller B.L."/>
            <person name="Mohamoud Y."/>
            <person name="Molina M."/>
            <person name="Monod M."/>
            <person name="Mouyna I."/>
            <person name="Mulligan S."/>
            <person name="Murphy L.D."/>
            <person name="O'Neil S."/>
            <person name="Paulsen I."/>
            <person name="Penalva M.A."/>
            <person name="Pertea M."/>
            <person name="Price C."/>
            <person name="Pritchard B.L."/>
            <person name="Quail M.A."/>
            <person name="Rabbinowitsch E."/>
            <person name="Rawlins N."/>
            <person name="Rajandream M.A."/>
            <person name="Reichard U."/>
            <person name="Renauld H."/>
            <person name="Robson G.D."/>
            <person name="Rodriguez de Cordoba S."/>
            <person name="Rodriguez-Pena J.M."/>
            <person name="Ronning C.M."/>
            <person name="Rutter S."/>
            <person name="Salzberg S.L."/>
            <person name="Sanchez M."/>
            <person name="Sanchez-Ferrero J.C."/>
            <person name="Saunders D."/>
            <person name="Seeger K."/>
            <person name="Squares R."/>
            <person name="Squares S."/>
            <person name="Takeuchi M."/>
            <person name="Tekaia F."/>
            <person name="Turner G."/>
            <person name="Vazquez de Aldana C.R."/>
            <person name="Weidman J."/>
            <person name="White O."/>
            <person name="Woodward J.R."/>
            <person name="Yu J.-H."/>
            <person name="Fraser C.M."/>
            <person name="Galagan J.E."/>
            <person name="Asai K."/>
            <person name="Machida M."/>
            <person name="Hall N."/>
            <person name="Barrell B.G."/>
            <person name="Denning D.W."/>
        </authorList>
    </citation>
    <scope>NUCLEOTIDE SEQUENCE [LARGE SCALE GENOMIC DNA]</scope>
    <source>
        <strain>ATCC MYA-4609 / CBS 101355 / FGSC A1100 / Af293</strain>
    </source>
</reference>
<reference key="2">
    <citation type="journal article" date="2006" name="Gene">
        <title>Phylogenomic analysis of non-ribosomal peptide synthetases in the genus Aspergillus.</title>
        <authorList>
            <person name="Cramer R.A. Jr."/>
            <person name="Stajich J.E."/>
            <person name="Yamanaka Y."/>
            <person name="Dietrich F.S."/>
            <person name="Steinbach W.J."/>
            <person name="Perfect J.R."/>
        </authorList>
    </citation>
    <scope>NOMENCLATURE</scope>
</reference>
<reference key="3">
    <citation type="journal article" date="2007" name="Microbiology">
        <title>Nonribosomal peptide synthesis in Aspergillus fumigatus and other fungi.</title>
        <authorList>
            <person name="Stack D."/>
            <person name="Neville C."/>
            <person name="Doyle S."/>
        </authorList>
    </citation>
    <scope>REVIEW ON FUNCTION</scope>
    <scope>DOMAIN</scope>
</reference>
<reference key="4">
    <citation type="journal article" date="2010" name="Biochemistry">
        <title>Anthranilate-activating modules from fungal nonribosomal peptide assembly lines.</title>
        <authorList>
            <person name="Ames B.D."/>
            <person name="Walsh C.T."/>
        </authorList>
    </citation>
    <scope>FUNCTION</scope>
</reference>
<reference key="5">
    <citation type="journal article" date="2010" name="Biochemistry">
        <title>Enzymatic processing of fumiquinazoline F: a tandem oxidative-acylation strategy for the generation of multicyclic scaffolds in fungal indole alkaloid biosynthesis.</title>
        <authorList>
            <person name="Ames B.D."/>
            <person name="Liu X."/>
            <person name="Walsh C.T."/>
        </authorList>
    </citation>
    <scope>FUNCTION</scope>
    <scope>DOMAIN</scope>
    <scope>CATALYTIC ACTIVITY</scope>
    <scope>PATHWAY</scope>
</reference>
<reference key="6">
    <citation type="journal article" date="2011" name="Biochemistry">
        <title>Complexity generation in fungal peptidyl alkaloid biosynthesis: oxidation of fumiquinazoline A to the heptacyclic hemiaminal fumiquinazoline C by the flavoenzyme Af12070 from Aspergillus fumigatus.</title>
        <authorList>
            <person name="Ames B.D."/>
            <person name="Haynes S.W."/>
            <person name="Gao X."/>
            <person name="Evans B.S."/>
            <person name="Kelleher N.L."/>
            <person name="Tang Y."/>
            <person name="Walsh C.T."/>
        </authorList>
    </citation>
    <scope>FUNCTION</scope>
</reference>
<reference key="7">
    <citation type="journal article" date="2014" name="Cell. Microbiol.">
        <title>Co-ordination between BrlA regulation and secretion of the oxidoreductase FmqD directs selective accumulation of fumiquinazoline C to conidial tissues in Aspergillus fumigatus.</title>
        <authorList>
            <person name="Lim F.Y."/>
            <person name="Ames B."/>
            <person name="Walsh C.T."/>
            <person name="Keller N.P."/>
        </authorList>
    </citation>
    <scope>FUNCTION</scope>
    <scope>DISRUPTION PHENOTYPE</scope>
    <scope>INDUCTION</scope>
    <scope>SUBCELLULAR LOCATION</scope>
    <scope>PATHWAY</scope>
</reference>
<reference key="8">
    <citation type="journal article" date="2021" name="Genetics">
        <title>Transcriptional control of the production of Aspergillus fumigatus conidia-borne secondary metabolite fumiquinazoline C important for phagocytosis protection.</title>
        <authorList>
            <person name="Rocha M.C."/>
            <person name="Fabri J.H.T.M."/>
            <person name="da Silva L.P."/>
            <person name="Angolini C.F.F."/>
            <person name="Bertolini M.C."/>
            <person name="da Cunha A.F."/>
            <person name="Valiante V."/>
            <person name="Goldman G.H."/>
            <person name="Fill T.P."/>
            <person name="Malavazi I."/>
        </authorList>
    </citation>
    <scope>FUNCTION</scope>
    <scope>INDUCTION</scope>
    <scope>INTERACTION WITH MPKA</scope>
    <scope>PHOSPHORYLATION</scope>
</reference>
<name>FMQC_ASPFU</name>
<sequence>MPDLIQTKSVVLGYGVKMVLAPAKAARSLLIREEAVWRFSLPRVLSTPTTMLETTEPIAHASELDKPSIVVTNTEVDSEDNTSSVLGRYIPQKCLQNARLAAVNSCVNEIFEARFRERPDAPAVCAWDGSYTYRELNDRSSALAHKLRRRGVQAEVLVALLFEKSKFSVVAMHAVIKAGGAFQLWDPSLPVARLGGMFAESKAHLVLASAANARLAAEISENVMVVDESLVPPWESAPLNPGTQPENALYCVFTSGSTGKPKGFLMDHRAFCTCALGVGELLGLNGASRLIQFSANSFDLATFDHILPFLCGACLCIPSEEERKGDLTRAFNRYRATHAVLTPTVSRLLEPEKLTTLQVLLLAGEAPSREDIRRWASTVGLLNGYSPAEAGCITIVNPSLQESHPSKIGFPVSVVPWVVDPDDCNRLVPAGEVGELVLQGHTLARGYFGRPDQSKAAFIPTPAWVRQFGYETYGRLYRTGDLVRFDAEDESLVYIGRKDSQVKIRGQRLELGEVEHALQQFFPRPQIVVVELLTAEDREPALVGFVYQPGSSQHMPAPPQHQDNSLFLVADDQFCADAQKALASLRDILPPYMIPSDLLRISHLPMVPSGKTDRRLIRMRAVDLAPEERRKYSSVLGQSRDQPVTQLEESLLGLWATCLKLPPSQIGVLDNFFHLGGGSLEAIHLAAEARNMGFAELSSAAVFQCPTIREMAGMLDGVTASVQEQDPRGCTSFQLESSLVAELLRKSQCTLEDLQEGFLPLTPFQEKTAKMKPMHLLLDIPGIDHSRLEAAWALVLEKHISFRSIYVEHQGRVYQAFLRQPDTVSIPIRWCDEPVHECAARFCEQDVDLILDGRPWWSMTRINNKIDSVLVLRLTHAQWDALTLDVLFKDFMAAYESRELSRRDLEFPAYMRFRLRHNASPATVRFWSTFLHGSRLTQPLLLDGAAEVDPGNEAMVFVSQQIPMLTPPHGITLGSVFRAAWAFVLARYTGQEDVVFGEFVEGRSLLVKSVEKVTGCAAAETPMRIVVSPTASVRDLLKHSQEQYVARIPYETCELEDIVPSSTSWPTDTTFNHILVIQHEPVLPPVALDGRPCPHRWAFHGRLEDVYVQMVFGPDTLHVGMSGPEIRLSRTIATQLVEKLASTITQFNDRPEALLSEITV</sequence>
<protein>
    <recommendedName>
        <fullName evidence="8">Nonribosomal peptide synthetase fmqC</fullName>
        <ecNumber evidence="4">6.3.2.-</ecNumber>
    </recommendedName>
    <alternativeName>
        <fullName evidence="10">Fumiquinazoline biosynthesis cluster protein C</fullName>
    </alternativeName>
</protein>
<comment type="function">
    <text evidence="3 4 5 6 7">Nonribosomal peptide synthetase; part of the gene cluster that mediates the biosynthesis of the antitumor fumiquinazolines that confer a dual-usage capability to defend against phagocytes in the environment and animal hosts (PubMed:20225828, PubMed:20804163, PubMed:21899262, PubMed:24612080, PubMed:33705521). The simplest member is fumiquinazoline F (FQF) with a 6-6-6 tricyclic core derived from anthranilic acid (Ant), tryptophan (Trp), and alanine (Ala) (PubMed:20225828). The trimodular NRPS fmqA is responsible for FQF formation (PubMed:20225828). Modules 1, 2 and 3 of fmqA are predicted to activate and load Ant, Trp and Ala, respectively, providing for the assembly of an Ant-Trp-Ala-S-enzyme intermediate that would undergo double cyclization for chain release and generation of the tricyclic 6-6-6 product fumiquinazoline F (PubMed:20225828). The presence of an E domain predicted for module 2 of fmqA is consistent with epimerization of L-Trp to D-Trp during assembly to generate the R-stereocenter at C14 of FQF (PubMed:20225828). The FAD-dependent monooxygenase fmqB and the monomodular NRPS fmqC then maturate FQF to FQA (PubMed:20804163). FmqB oxidizes the 2',3'-double bond of the indole side chain of FQF, and fmqC activates L-Ala as the adenylate, installs it as the pantetheinyl thioester on its carrier protein domain, and acylates the oxidized indole for subsequent intramolecular cyclization to create the 6-5-5-imidazolindolone of FQA (PubMed:20804163). The FAD-linked oxidoreductase fmqD introduces a third layer of scaffold complexity by converting FQA to the spirohemiaminal FQC, presumably by catalyzing the formation of a transient imine within the pyrazinone ring (PubMed:21899262). FQC subsequently converts nonenzymatically to the known cyclic aminal FQD (PubMed:21899262).</text>
</comment>
<comment type="pathway">
    <text evidence="4 6">Alkaloid biosynthesis.</text>
</comment>
<comment type="subunit">
    <text evidence="7">Interacts with the mitogen-activated protein kinase mpkA.</text>
</comment>
<comment type="subcellular location">
    <subcellularLocation>
        <location evidence="6">Cytoplasm</location>
    </subcellularLocation>
</comment>
<comment type="induction">
    <text evidence="6 7">Expression is positively regulated by brlA, a conidiation-specific transcription factor involved in the early stage of asexual development and necessary for conidiophore formation (PubMed:24612080). Expression is also induced by the cell wall integrity (CWI) signaling pathway that includes the mitogen-activated protein kinase mpkA and the transcription factor rlmA (PubMed:33705521). Expression is negatively regulated by the transcription factor sebA (PubMed:33705521).</text>
</comment>
<comment type="domain">
    <text evidence="12 13">NRP synthetases are composed of discrete domains (adenylation (A), thiolation (T) or peptidyl carrier protein (PCP) and condensation (C) domains) which when grouped together are referred to as a single module (PubMed:17464044). Each module is responsible for the recognition (via the A domain) and incorporation of a single amino acid into the growing peptide product (PubMed:17464044). Thus, an NRP synthetase is generally composed of one or more modules and can terminate in a thioesterase domain (TE) that releases the newly synthesized peptide from the enzyme (PubMed:17464044). Occasionally, epimerase (E) domains (responsible for L- to D- amino acid conversion) are present within the NRP synthetase (PubMed:17464044). NRPS11 has the following architecture: A-T-C (PubMed:17464044, PubMed:20804163).</text>
</comment>
<comment type="PTM">
    <text evidence="7">Phosphorylated by mpkA during conidiogenesis.</text>
</comment>
<comment type="disruption phenotype">
    <text evidence="6">Abolishes the production of fumiquinazoline A and C but does not accumulate fumiquinazoline F (PubMed:24612080).</text>
</comment>
<comment type="similarity">
    <text evidence="11">Belongs to the NRP synthetase family.</text>
</comment>
<dbReference type="EC" id="6.3.2.-" evidence="4"/>
<dbReference type="EMBL" id="AAHF01000006">
    <property type="protein sequence ID" value="EAL89046.1"/>
    <property type="molecule type" value="Genomic_DNA"/>
</dbReference>
<dbReference type="RefSeq" id="XP_751084.1">
    <property type="nucleotide sequence ID" value="XM_745991.1"/>
</dbReference>
<dbReference type="SMR" id="Q4WLW8"/>
<dbReference type="STRING" id="330879.Q4WLW8"/>
<dbReference type="EnsemblFungi" id="EAL89046">
    <property type="protein sequence ID" value="EAL89046"/>
    <property type="gene ID" value="AFUA_6G12050"/>
</dbReference>
<dbReference type="GeneID" id="3508389"/>
<dbReference type="KEGG" id="afm:AFUA_6G12050"/>
<dbReference type="VEuPathDB" id="FungiDB:Afu6g12050"/>
<dbReference type="eggNOG" id="KOG1178">
    <property type="taxonomic scope" value="Eukaryota"/>
</dbReference>
<dbReference type="HOGENOM" id="CLU_000022_60_3_1"/>
<dbReference type="InParanoid" id="Q4WLW8"/>
<dbReference type="OMA" id="WANHNDE"/>
<dbReference type="OrthoDB" id="416786at2759"/>
<dbReference type="BioCyc" id="MetaCyc:MONOMER-18833"/>
<dbReference type="Proteomes" id="UP000002530">
    <property type="component" value="Chromosome 6"/>
</dbReference>
<dbReference type="GO" id="GO:0005737">
    <property type="term" value="C:cytoplasm"/>
    <property type="evidence" value="ECO:0000314"/>
    <property type="project" value="AspGD"/>
</dbReference>
<dbReference type="GO" id="GO:0016874">
    <property type="term" value="F:ligase activity"/>
    <property type="evidence" value="ECO:0007669"/>
    <property type="project" value="UniProtKB-KW"/>
</dbReference>
<dbReference type="GO" id="GO:0031177">
    <property type="term" value="F:phosphopantetheine binding"/>
    <property type="evidence" value="ECO:0000318"/>
    <property type="project" value="GO_Central"/>
</dbReference>
<dbReference type="GO" id="GO:0043041">
    <property type="term" value="P:amino acid activation for nonribosomal peptide biosynthetic process"/>
    <property type="evidence" value="ECO:0000318"/>
    <property type="project" value="GO_Central"/>
</dbReference>
<dbReference type="GO" id="GO:0008218">
    <property type="term" value="P:bioluminescence"/>
    <property type="evidence" value="ECO:0007669"/>
    <property type="project" value="UniProtKB-KW"/>
</dbReference>
<dbReference type="GO" id="GO:1900809">
    <property type="term" value="P:fumigaclavine C biosynthetic process"/>
    <property type="evidence" value="ECO:0000315"/>
    <property type="project" value="AspGD"/>
</dbReference>
<dbReference type="GO" id="GO:1900781">
    <property type="term" value="P:fumiquinazoline C biosynthetic process"/>
    <property type="evidence" value="ECO:0000314"/>
    <property type="project" value="AspGD"/>
</dbReference>
<dbReference type="GO" id="GO:0019184">
    <property type="term" value="P:nonribosomal peptide biosynthetic process"/>
    <property type="evidence" value="ECO:0000255"/>
    <property type="project" value="AspGD"/>
</dbReference>
<dbReference type="GO" id="GO:0019748">
    <property type="term" value="P:secondary metabolic process"/>
    <property type="evidence" value="ECO:0000303"/>
    <property type="project" value="AspGD"/>
</dbReference>
<dbReference type="GO" id="GO:0044550">
    <property type="term" value="P:secondary metabolite biosynthetic process"/>
    <property type="evidence" value="ECO:0000314"/>
    <property type="project" value="AspGD"/>
</dbReference>
<dbReference type="CDD" id="cd05918">
    <property type="entry name" value="A_NRPS_SidN3_like"/>
    <property type="match status" value="1"/>
</dbReference>
<dbReference type="FunFam" id="3.30.300.30:FF:000015">
    <property type="entry name" value="Nonribosomal peptide synthase SidD"/>
    <property type="match status" value="1"/>
</dbReference>
<dbReference type="Gene3D" id="3.30.300.30">
    <property type="match status" value="1"/>
</dbReference>
<dbReference type="Gene3D" id="1.10.1200.10">
    <property type="entry name" value="ACP-like"/>
    <property type="match status" value="1"/>
</dbReference>
<dbReference type="Gene3D" id="3.30.559.10">
    <property type="entry name" value="Chloramphenicol acetyltransferase-like domain"/>
    <property type="match status" value="1"/>
</dbReference>
<dbReference type="Gene3D" id="3.40.50.12780">
    <property type="entry name" value="N-terminal domain of ligase-like"/>
    <property type="match status" value="1"/>
</dbReference>
<dbReference type="Gene3D" id="3.30.559.30">
    <property type="entry name" value="Nonribosomal peptide synthetase, condensation domain"/>
    <property type="match status" value="1"/>
</dbReference>
<dbReference type="InterPro" id="IPR010071">
    <property type="entry name" value="AA_adenyl_dom"/>
</dbReference>
<dbReference type="InterPro" id="IPR036736">
    <property type="entry name" value="ACP-like_sf"/>
</dbReference>
<dbReference type="InterPro" id="IPR045851">
    <property type="entry name" value="AMP-bd_C_sf"/>
</dbReference>
<dbReference type="InterPro" id="IPR000873">
    <property type="entry name" value="AMP-dep_synth/lig_dom"/>
</dbReference>
<dbReference type="InterPro" id="IPR042099">
    <property type="entry name" value="ANL_N_sf"/>
</dbReference>
<dbReference type="InterPro" id="IPR023213">
    <property type="entry name" value="CAT-like_dom_sf"/>
</dbReference>
<dbReference type="InterPro" id="IPR001242">
    <property type="entry name" value="Condensatn"/>
</dbReference>
<dbReference type="InterPro" id="IPR009081">
    <property type="entry name" value="PP-bd_ACP"/>
</dbReference>
<dbReference type="NCBIfam" id="TIGR01733">
    <property type="entry name" value="AA-adenyl-dom"/>
    <property type="match status" value="1"/>
</dbReference>
<dbReference type="PANTHER" id="PTHR45527">
    <property type="entry name" value="NONRIBOSOMAL PEPTIDE SYNTHETASE"/>
    <property type="match status" value="1"/>
</dbReference>
<dbReference type="PANTHER" id="PTHR45527:SF3">
    <property type="entry name" value="SIDEROPHORE SYNTHETASE (EUROFUNG)"/>
    <property type="match status" value="1"/>
</dbReference>
<dbReference type="Pfam" id="PF00501">
    <property type="entry name" value="AMP-binding"/>
    <property type="match status" value="1"/>
</dbReference>
<dbReference type="Pfam" id="PF00668">
    <property type="entry name" value="Condensation"/>
    <property type="match status" value="1"/>
</dbReference>
<dbReference type="Pfam" id="PF00550">
    <property type="entry name" value="PP-binding"/>
    <property type="match status" value="1"/>
</dbReference>
<dbReference type="SUPFAM" id="SSF56801">
    <property type="entry name" value="Acetyl-CoA synthetase-like"/>
    <property type="match status" value="1"/>
</dbReference>
<dbReference type="SUPFAM" id="SSF47336">
    <property type="entry name" value="ACP-like"/>
    <property type="match status" value="1"/>
</dbReference>
<dbReference type="SUPFAM" id="SSF52777">
    <property type="entry name" value="CoA-dependent acyltransferases"/>
    <property type="match status" value="2"/>
</dbReference>
<dbReference type="PROSITE" id="PS50075">
    <property type="entry name" value="CARRIER"/>
    <property type="match status" value="1"/>
</dbReference>
<keyword id="KW-0963">Cytoplasm</keyword>
<keyword id="KW-0436">Ligase</keyword>
<keyword id="KW-0455">Luminescence</keyword>
<keyword id="KW-0596">Phosphopantetheine</keyword>
<keyword id="KW-0597">Phosphoprotein</keyword>
<keyword id="KW-0599">Photoprotein</keyword>
<keyword id="KW-1185">Reference proteome</keyword>
<keyword id="KW-0677">Repeat</keyword>
<keyword id="KW-0843">Virulence</keyword>
<proteinExistence type="evidence at protein level"/>